<reference key="1">
    <citation type="journal article" date="2005" name="Arch. Microbiol.">
        <title>The genome sequence of an anaerobic aromatic-degrading denitrifying bacterium, strain EbN1.</title>
        <authorList>
            <person name="Rabus R."/>
            <person name="Kube M."/>
            <person name="Heider J."/>
            <person name="Beck A."/>
            <person name="Heitmann K."/>
            <person name="Widdel F."/>
            <person name="Reinhardt R."/>
        </authorList>
    </citation>
    <scope>NUCLEOTIDE SEQUENCE [LARGE SCALE GENOMIC DNA]</scope>
    <source>
        <strain>DSM 19018 / LMG 30748 / EbN1</strain>
    </source>
</reference>
<feature type="chain" id="PRO_0000160984" description="Histidine ammonia-lyase">
    <location>
        <begin position="1"/>
        <end position="526"/>
    </location>
</feature>
<feature type="modified residue" description="2,3-didehydroalanine (Ser)" evidence="1">
    <location>
        <position position="144"/>
    </location>
</feature>
<feature type="cross-link" description="5-imidazolinone (Ala-Gly)" evidence="1">
    <location>
        <begin position="143"/>
        <end position="145"/>
    </location>
</feature>
<protein>
    <recommendedName>
        <fullName evidence="1">Histidine ammonia-lyase</fullName>
        <shortName evidence="1">Histidase</shortName>
        <ecNumber evidence="1">4.3.1.3</ecNumber>
    </recommendedName>
</protein>
<name>HUTH_AROAE</name>
<comment type="catalytic activity">
    <reaction evidence="1">
        <text>L-histidine = trans-urocanate + NH4(+)</text>
        <dbReference type="Rhea" id="RHEA:21232"/>
        <dbReference type="ChEBI" id="CHEBI:17771"/>
        <dbReference type="ChEBI" id="CHEBI:28938"/>
        <dbReference type="ChEBI" id="CHEBI:57595"/>
        <dbReference type="EC" id="4.3.1.3"/>
    </reaction>
</comment>
<comment type="pathway">
    <text evidence="1">Amino-acid degradation; L-histidine degradation into L-glutamate; N-formimidoyl-L-glutamate from L-histidine: step 1/3.</text>
</comment>
<comment type="subcellular location">
    <subcellularLocation>
        <location evidence="1">Cytoplasm</location>
    </subcellularLocation>
</comment>
<comment type="PTM">
    <text evidence="1">Contains an active site 4-methylidene-imidazol-5-one (MIO), which is formed autocatalytically by cyclization and dehydration of residues Ala-Ser-Gly.</text>
</comment>
<comment type="similarity">
    <text evidence="1">Belongs to the PAL/histidase family.</text>
</comment>
<accession>Q5NZX8</accession>
<sequence length="526" mass="54655">MTAVCLHPGRLTLAELRTIAFSDSRLELEPACFPVVARGAATVAAIARSGEPAYGINTGFGRLAQTHIPDDQLELLQKNLVLSHAVGVGEPLSAPTVRLVLALKIASLARGHSGVRMELINALLGLFNAGVIPRVPSKGSVGASGDLAPLAHLSALLLGIGEAYVDGRHVPATEALAIAGLAPMTLAAKEGLALLNGTQVSTALALVNLFAIETVFRTALVAGALSVDAAAGSFKPFDARIHALRGQPGQIDAAATYRQLLEGSGINLAHRDCGKVQDPYSLRCQPQVMGACLDQMRHAARVLLIEANAVSDNPLVFPDSGEVLSGGNFHGEPVAFAADALALAAAEIGALAERRIALLIDATLSGLPPFLVTEGGVNSGFMIAHVTAAALASENKLLAHPASVDSLPTSANQEDHVSMSTFAARKLGELADNTATILAIELLAAAQGVELRAPHRTSPRLQAVLALIRSRVPHYDIDRYFAPDIASIKDEVSAGAFARHCPLSFDSERVADGEASRSATPDDESL</sequence>
<proteinExistence type="inferred from homology"/>
<gene>
    <name evidence="1" type="primary">hutH</name>
    <name type="ordered locus">AZOSEA32610</name>
    <name type="ORF">ebA5742</name>
</gene>
<evidence type="ECO:0000255" key="1">
    <source>
        <dbReference type="HAMAP-Rule" id="MF_00229"/>
    </source>
</evidence>
<keyword id="KW-0963">Cytoplasm</keyword>
<keyword id="KW-0369">Histidine metabolism</keyword>
<keyword id="KW-0456">Lyase</keyword>
<keyword id="KW-1185">Reference proteome</keyword>
<organism>
    <name type="scientific">Aromatoleum aromaticum (strain DSM 19018 / LMG 30748 / EbN1)</name>
    <name type="common">Azoarcus sp. (strain EbN1)</name>
    <dbReference type="NCBI Taxonomy" id="76114"/>
    <lineage>
        <taxon>Bacteria</taxon>
        <taxon>Pseudomonadati</taxon>
        <taxon>Pseudomonadota</taxon>
        <taxon>Betaproteobacteria</taxon>
        <taxon>Rhodocyclales</taxon>
        <taxon>Rhodocyclaceae</taxon>
        <taxon>Aromatoleum</taxon>
    </lineage>
</organism>
<dbReference type="EC" id="4.3.1.3" evidence="1"/>
<dbReference type="EMBL" id="CR555306">
    <property type="protein sequence ID" value="CAI09386.1"/>
    <property type="molecule type" value="Genomic_DNA"/>
</dbReference>
<dbReference type="RefSeq" id="WP_011239051.1">
    <property type="nucleotide sequence ID" value="NC_006513.1"/>
</dbReference>
<dbReference type="SMR" id="Q5NZX8"/>
<dbReference type="STRING" id="76114.ebA5742"/>
<dbReference type="KEGG" id="eba:ebA5742"/>
<dbReference type="eggNOG" id="COG2986">
    <property type="taxonomic scope" value="Bacteria"/>
</dbReference>
<dbReference type="HOGENOM" id="CLU_014801_4_0_4"/>
<dbReference type="OrthoDB" id="9806955at2"/>
<dbReference type="UniPathway" id="UPA00379">
    <property type="reaction ID" value="UER00549"/>
</dbReference>
<dbReference type="Proteomes" id="UP000006552">
    <property type="component" value="Chromosome"/>
</dbReference>
<dbReference type="GO" id="GO:0005737">
    <property type="term" value="C:cytoplasm"/>
    <property type="evidence" value="ECO:0007669"/>
    <property type="project" value="UniProtKB-SubCell"/>
</dbReference>
<dbReference type="GO" id="GO:0004397">
    <property type="term" value="F:histidine ammonia-lyase activity"/>
    <property type="evidence" value="ECO:0007669"/>
    <property type="project" value="UniProtKB-UniRule"/>
</dbReference>
<dbReference type="GO" id="GO:0019556">
    <property type="term" value="P:L-histidine catabolic process to glutamate and formamide"/>
    <property type="evidence" value="ECO:0007669"/>
    <property type="project" value="UniProtKB-UniPathway"/>
</dbReference>
<dbReference type="GO" id="GO:0019557">
    <property type="term" value="P:L-histidine catabolic process to glutamate and formate"/>
    <property type="evidence" value="ECO:0007669"/>
    <property type="project" value="UniProtKB-UniPathway"/>
</dbReference>
<dbReference type="CDD" id="cd00332">
    <property type="entry name" value="PAL-HAL"/>
    <property type="match status" value="1"/>
</dbReference>
<dbReference type="FunFam" id="1.10.275.10:FF:000005">
    <property type="entry name" value="Histidine ammonia-lyase"/>
    <property type="match status" value="1"/>
</dbReference>
<dbReference type="FunFam" id="1.20.200.10:FF:000003">
    <property type="entry name" value="Histidine ammonia-lyase"/>
    <property type="match status" value="1"/>
</dbReference>
<dbReference type="Gene3D" id="1.20.200.10">
    <property type="entry name" value="Fumarase/aspartase (Central domain)"/>
    <property type="match status" value="1"/>
</dbReference>
<dbReference type="Gene3D" id="1.10.275.10">
    <property type="entry name" value="Fumarase/aspartase (N-terminal domain)"/>
    <property type="match status" value="1"/>
</dbReference>
<dbReference type="HAMAP" id="MF_00229">
    <property type="entry name" value="His_ammonia_lyase"/>
    <property type="match status" value="1"/>
</dbReference>
<dbReference type="InterPro" id="IPR001106">
    <property type="entry name" value="Aromatic_Lyase"/>
</dbReference>
<dbReference type="InterPro" id="IPR024083">
    <property type="entry name" value="Fumarase/histidase_N"/>
</dbReference>
<dbReference type="InterPro" id="IPR005921">
    <property type="entry name" value="HutH"/>
</dbReference>
<dbReference type="InterPro" id="IPR008948">
    <property type="entry name" value="L-Aspartase-like"/>
</dbReference>
<dbReference type="InterPro" id="IPR022313">
    <property type="entry name" value="Phe/His_NH3-lyase_AS"/>
</dbReference>
<dbReference type="NCBIfam" id="TIGR01225">
    <property type="entry name" value="hutH"/>
    <property type="match status" value="1"/>
</dbReference>
<dbReference type="NCBIfam" id="NF006871">
    <property type="entry name" value="PRK09367.1"/>
    <property type="match status" value="1"/>
</dbReference>
<dbReference type="PANTHER" id="PTHR10362">
    <property type="entry name" value="HISTIDINE AMMONIA-LYASE"/>
    <property type="match status" value="1"/>
</dbReference>
<dbReference type="Pfam" id="PF00221">
    <property type="entry name" value="Lyase_aromatic"/>
    <property type="match status" value="1"/>
</dbReference>
<dbReference type="SUPFAM" id="SSF48557">
    <property type="entry name" value="L-aspartase-like"/>
    <property type="match status" value="1"/>
</dbReference>
<dbReference type="PROSITE" id="PS00488">
    <property type="entry name" value="PAL_HISTIDASE"/>
    <property type="match status" value="1"/>
</dbReference>